<dbReference type="EC" id="3.2.2.-" evidence="4"/>
<dbReference type="EMBL" id="AL123456">
    <property type="protein sequence ID" value="CCP42782.1"/>
    <property type="molecule type" value="Genomic_DNA"/>
</dbReference>
<dbReference type="RefSeq" id="NP_214574.1">
    <property type="nucleotide sequence ID" value="NC_000962.3"/>
</dbReference>
<dbReference type="RefSeq" id="WP_003400551.1">
    <property type="nucleotide sequence ID" value="NZ_NVQJ01000005.1"/>
</dbReference>
<dbReference type="PDB" id="5M3I">
    <property type="method" value="X-ray"/>
    <property type="resolution" value="2.17 A"/>
    <property type="chains" value="A/B/C/D=1-155"/>
</dbReference>
<dbReference type="PDB" id="7YK3">
    <property type="method" value="X-ray"/>
    <property type="resolution" value="2.20 A"/>
    <property type="chains" value="B/D=164-351"/>
</dbReference>
<dbReference type="PDBsum" id="5M3I"/>
<dbReference type="PDBsum" id="7YK3"/>
<dbReference type="SMR" id="O53605"/>
<dbReference type="STRING" id="83332.Rv0060"/>
<dbReference type="PaxDb" id="83332-Rv0060"/>
<dbReference type="DNASU" id="887004"/>
<dbReference type="GeneID" id="45424019"/>
<dbReference type="GeneID" id="887004"/>
<dbReference type="KEGG" id="mtu:Rv0060"/>
<dbReference type="KEGG" id="mtv:RVBD_0060"/>
<dbReference type="PATRIC" id="fig|83332.111.peg.67"/>
<dbReference type="TubercuList" id="Rv0060"/>
<dbReference type="eggNOG" id="COG2110">
    <property type="taxonomic scope" value="Bacteria"/>
</dbReference>
<dbReference type="InParanoid" id="O53605"/>
<dbReference type="OrthoDB" id="9780211at2"/>
<dbReference type="PhylomeDB" id="O53605"/>
<dbReference type="Proteomes" id="UP000001584">
    <property type="component" value="Chromosome"/>
</dbReference>
<dbReference type="GO" id="GO:0005829">
    <property type="term" value="C:cytosol"/>
    <property type="evidence" value="ECO:0007005"/>
    <property type="project" value="MTBBASE"/>
</dbReference>
<dbReference type="GO" id="GO:0047407">
    <property type="term" value="F:ADP-ribosyl-[dinitrogen reductase] hydrolase activity"/>
    <property type="evidence" value="ECO:0000318"/>
    <property type="project" value="GO_Central"/>
</dbReference>
<dbReference type="GO" id="GO:0006974">
    <property type="term" value="P:DNA damage response"/>
    <property type="evidence" value="ECO:0000318"/>
    <property type="project" value="GO_Central"/>
</dbReference>
<dbReference type="GO" id="GO:0042278">
    <property type="term" value="P:purine nucleoside metabolic process"/>
    <property type="evidence" value="ECO:0000318"/>
    <property type="project" value="GO_Central"/>
</dbReference>
<dbReference type="CDD" id="cd02901">
    <property type="entry name" value="Macro_Poa1p-like"/>
    <property type="match status" value="1"/>
</dbReference>
<dbReference type="Gene3D" id="3.40.220.10">
    <property type="entry name" value="Leucine Aminopeptidase, subunit E, domain 1"/>
    <property type="match status" value="1"/>
</dbReference>
<dbReference type="InterPro" id="IPR050892">
    <property type="entry name" value="ADP-ribose_metab_enzymes"/>
</dbReference>
<dbReference type="InterPro" id="IPR002589">
    <property type="entry name" value="Macro_dom"/>
</dbReference>
<dbReference type="InterPro" id="IPR043472">
    <property type="entry name" value="Macro_dom-like"/>
</dbReference>
<dbReference type="PANTHER" id="PTHR12521:SF0">
    <property type="entry name" value="ADP-RIBOSE GLYCOHYDROLASE OARD1"/>
    <property type="match status" value="1"/>
</dbReference>
<dbReference type="PANTHER" id="PTHR12521">
    <property type="entry name" value="PROTEIN C6ORF130"/>
    <property type="match status" value="1"/>
</dbReference>
<dbReference type="Pfam" id="PF01661">
    <property type="entry name" value="Macro"/>
    <property type="match status" value="1"/>
</dbReference>
<dbReference type="SMART" id="SM00506">
    <property type="entry name" value="A1pp"/>
    <property type="match status" value="1"/>
</dbReference>
<dbReference type="SUPFAM" id="SSF52949">
    <property type="entry name" value="Macro domain-like"/>
    <property type="match status" value="1"/>
</dbReference>
<dbReference type="PROSITE" id="PS51154">
    <property type="entry name" value="MACRO"/>
    <property type="match status" value="1"/>
</dbReference>
<comment type="function">
    <text evidence="4 5 6">Antitoxin component of the hybrid type II/IV toxin-antitoxin (TA) system DarTG, which plays a crucial role in controlling bacterial growth and bacteriophage infection. Keeps the toxin molecules in check under normal growth conditions. De-ADP-ribosylates DNA (probably) modified on thymidine by its cognate toxin DarT, which neutralizes the activity of DarT (PubMed:27939941). Experiments in which DarG levels are depleted lead to cell death; expression of wild-type DarG protein from M.tuberculosis or T.aquaticus restores growth. Cells depleted of DarG are more sensitive to bedaquilline (targets respiration), DNA-damaging drugs (mitomycin C, netropsin) and transcription-targeted drugs (rifabutin and rifampicin). When depleted, a DNA-damage response is induced and mutability is increased (PubMed:32634279). In E.coli the macrodomain alone neutralizes DarT toxin from non-cognate T.aquaticus. The same domain de-ADP-ribosylates genomic DNA (PubMed:34408320).</text>
</comment>
<comment type="catalytic activity">
    <reaction>
        <text>an N-(ADP-alpha-D-ribosyl)-thymidine in DNA + H2O = a thymidine in DNA + ADP-D-ribose</text>
        <dbReference type="Rhea" id="RHEA:71655"/>
        <dbReference type="Rhea" id="RHEA-COMP:13556"/>
        <dbReference type="Rhea" id="RHEA-COMP:18051"/>
        <dbReference type="ChEBI" id="CHEBI:15377"/>
        <dbReference type="ChEBI" id="CHEBI:57967"/>
        <dbReference type="ChEBI" id="CHEBI:137386"/>
        <dbReference type="ChEBI" id="CHEBI:191199"/>
    </reaction>
    <physiologicalReaction direction="left-to-right" evidence="4 6">
        <dbReference type="Rhea" id="RHEA:71656"/>
    </physiologicalReaction>
</comment>
<comment type="subunit">
    <text evidence="5 7">Interacts (via C-terminus) with cognate toxin DarT; this heterodimeric complex neutralizes the toxic effect of DarT by preventing ssDNA binding to DarT and consequently inactivating the toxin by direct protein-protein interactions (PubMed:32634279, PubMed:37167974). Co-immunoprecipitates with a number proteins known to be involved in DNA metabolism, in the presence and absence of darT; includes alkA, dnaB, dnaE1, dnaG, dus, embR, mtrA, nrdE, nrdR, polA, recA, recB, recF, xerD, Rv2258c (PubMed:32634279).</text>
</comment>
<comment type="induction">
    <text evidence="6">Part of the dnaB-darT-darG operon.</text>
</comment>
<comment type="domain">
    <text evidence="6 7">The N-terminus macro domain alone is sufficient to neutralize DarT from non-cognate T.aquaticus in E.coli, DarT in M.bovis, and to de-ADP-ribosylate DNA in vitro (PubMed:34408320). The C-terminus is a region interacting with the DarT toxin ssDNA binding region (PubMed:37167974).</text>
</comment>
<comment type="disruption phenotype">
    <text evidence="3 5 6">Cells lacking this gene display impaired growth (PubMed:12657046). A double darT-darG deletion shows no change in growth in culture, upon infection of mice, or upon exposure to a variety of stresses (PubMed:32634279). Another group finds the double knockout gives a competitive advantage over wild-type cells in liquid culture growth experiments. Knock-down of darG expression leads to increased RecA expression, ADP-ribosylation of OriC and growth arrest (PubMed:34408320).</text>
</comment>
<comment type="biotechnology">
    <text evidence="11">As expression of DarT is bactericidal (rather than bacteriostatic as are most TA systems in this bacteria), inactivation of DarG may be an attractive drug target.</text>
</comment>
<comment type="similarity">
    <text evidence="10">Belongs to the DarG ADP-ribosyl glycohydrolase family.</text>
</comment>
<proteinExistence type="evidence at protein level"/>
<reference evidence="12" key="1">
    <citation type="journal article" date="1998" name="Nature">
        <title>Deciphering the biology of Mycobacterium tuberculosis from the complete genome sequence.</title>
        <authorList>
            <person name="Cole S.T."/>
            <person name="Brosch R."/>
            <person name="Parkhill J."/>
            <person name="Garnier T."/>
            <person name="Churcher C.M."/>
            <person name="Harris D.E."/>
            <person name="Gordon S.V."/>
            <person name="Eiglmeier K."/>
            <person name="Gas S."/>
            <person name="Barry C.E. III"/>
            <person name="Tekaia F."/>
            <person name="Badcock K."/>
            <person name="Basham D."/>
            <person name="Brown D."/>
            <person name="Chillingworth T."/>
            <person name="Connor R."/>
            <person name="Davies R.M."/>
            <person name="Devlin K."/>
            <person name="Feltwell T."/>
            <person name="Gentles S."/>
            <person name="Hamlin N."/>
            <person name="Holroyd S."/>
            <person name="Hornsby T."/>
            <person name="Jagels K."/>
            <person name="Krogh A."/>
            <person name="McLean J."/>
            <person name="Moule S."/>
            <person name="Murphy L.D."/>
            <person name="Oliver S."/>
            <person name="Osborne J."/>
            <person name="Quail M.A."/>
            <person name="Rajandream M.A."/>
            <person name="Rogers J."/>
            <person name="Rutter S."/>
            <person name="Seeger K."/>
            <person name="Skelton S."/>
            <person name="Squares S."/>
            <person name="Squares R."/>
            <person name="Sulston J.E."/>
            <person name="Taylor K."/>
            <person name="Whitehead S."/>
            <person name="Barrell B.G."/>
        </authorList>
    </citation>
    <scope>NUCLEOTIDE SEQUENCE [LARGE SCALE GENOMIC DNA]</scope>
    <source>
        <strain>ATCC 25618 / H37Rv</strain>
    </source>
</reference>
<reference key="2">
    <citation type="journal article" date="2003" name="Mol. Microbiol.">
        <title>Genes required for mycobacterial growth defined by high density mutagenesis.</title>
        <authorList>
            <person name="Sassetti C.M."/>
            <person name="Boyd D.H."/>
            <person name="Rubin E.J."/>
        </authorList>
    </citation>
    <scope>DISRUPTION PHENOTYPE</scope>
    <source>
        <strain>ATCC 25618 / H37Rv</strain>
    </source>
</reference>
<reference evidence="15" key="3">
    <citation type="journal article" date="2011" name="Mol. Cell. Proteomics">
        <title>Proteogenomic analysis of Mycobacterium tuberculosis by high resolution mass spectrometry.</title>
        <authorList>
            <person name="Kelkar D.S."/>
            <person name="Kumar D."/>
            <person name="Kumar P."/>
            <person name="Balakrishnan L."/>
            <person name="Muthusamy B."/>
            <person name="Yadav A.K."/>
            <person name="Shrivastava P."/>
            <person name="Marimuthu A."/>
            <person name="Anand S."/>
            <person name="Sundaram H."/>
            <person name="Kingsbury R."/>
            <person name="Harsha H.C."/>
            <person name="Nair B."/>
            <person name="Prasad T.S."/>
            <person name="Chauhan D.S."/>
            <person name="Katoch K."/>
            <person name="Katoch V.M."/>
            <person name="Kumar P."/>
            <person name="Chaerkady R."/>
            <person name="Ramachandran S."/>
            <person name="Dash D."/>
            <person name="Pandey A."/>
        </authorList>
    </citation>
    <scope>IDENTIFICATION BY MASS SPECTROMETRY [LARGE SCALE ANALYSIS]</scope>
    <source>
        <strain>ATCC 25618 / H37Rv</strain>
    </source>
</reference>
<reference key="4">
    <citation type="journal article" date="2020" name="Mol. Microbiol.">
        <title>Depletion of the DarG antitoxin in Mycobacterium tuberculosis triggers the DNA-damage response and leads to cell death.</title>
        <authorList>
            <person name="Zaveri A."/>
            <person name="Wang R."/>
            <person name="Botella L."/>
            <person name="Sharma R."/>
            <person name="Zhu L."/>
            <person name="Wallach J.B."/>
            <person name="Song N."/>
            <person name="Jansen R.S."/>
            <person name="Rhee K.Y."/>
            <person name="Ehrt S."/>
            <person name="Schnappinger D."/>
        </authorList>
    </citation>
    <scope>FUNCTION AS AN ANTITOXIN</scope>
    <scope>SUBUNIT</scope>
    <scope>DISRUPTION PHENOTYPE</scope>
    <scope>BIOTECHNOLOGY</scope>
    <source>
        <strain>H37Rv</strain>
    </source>
</reference>
<reference key="5">
    <citation type="journal article" date="2021" name="Nature">
        <title>Molecular basis for DarT ADP-ribosylation of a DNA base.</title>
        <authorList>
            <person name="Schuller M."/>
            <person name="Butler R.E."/>
            <person name="Ariza A."/>
            <person name="Tromans-Coia C."/>
            <person name="Jankevicius G."/>
            <person name="Claridge T.D.W."/>
            <person name="Kendall S.L."/>
            <person name="Goh S."/>
            <person name="Stewart G.R."/>
            <person name="Ahel I."/>
        </authorList>
    </citation>
    <scope>FUNCTION AS AN ANTITOXIN</scope>
    <scope>FUNCTION AS AN ADP-RIBOSYL GLYCOHYDROLASE</scope>
    <scope>OPERON STRUCTURE</scope>
    <scope>DOMAIN</scope>
    <source>
        <strain>H37Rv</strain>
    </source>
</reference>
<reference evidence="13" key="6">
    <citation type="journal article" date="2016" name="Mol. Cell">
        <title>The Toxin-Antitoxin System DarTG Catalyzes Reversible ADP-Ribosylation of DNA.</title>
        <authorList>
            <person name="Jankevicius G."/>
            <person name="Ariza A."/>
            <person name="Ahel M."/>
            <person name="Ahel I."/>
        </authorList>
    </citation>
    <scope>X-RAY CRYSTALLOGRAPHY (2.17 ANGSTROMS) OF 1-155</scope>
    <scope>FUNCTION AS AN ANTITOXIN</scope>
    <scope>FUNCTION AS AN ADP-RIBOSYL GLYCOHYDROLASE</scope>
    <source>
        <strain>H37Rv</strain>
    </source>
</reference>
<reference evidence="14" key="7">
    <citation type="journal article" date="2023" name="Structure">
        <title>Structural insights into DarT toxin neutralization by cognate DarG antitoxin: ssDNA mimicry by DarG C-terminal domain keeps the DarT toxin inhibited.</title>
        <authorList>
            <person name="Deep A."/>
            <person name="Singh L."/>
            <person name="Kaur J."/>
            <person name="Velusamy M."/>
            <person name="Bhardwaj P."/>
            <person name="Singh R."/>
            <person name="Thakur K.G."/>
        </authorList>
    </citation>
    <scope>X-RAY CRYSTALLOGRAPHY (2.20 ANGSTROMS) OF 164-351</scope>
    <scope>SUBUNIT</scope>
    <scope>DOMAIN</scope>
</reference>
<evidence type="ECO:0000250" key="1">
    <source>
        <dbReference type="UniProtKB" id="P0DV57"/>
    </source>
</evidence>
<evidence type="ECO:0000255" key="2">
    <source>
        <dbReference type="PROSITE-ProRule" id="PRU00490"/>
    </source>
</evidence>
<evidence type="ECO:0000269" key="3">
    <source>
    </source>
</evidence>
<evidence type="ECO:0000269" key="4">
    <source>
    </source>
</evidence>
<evidence type="ECO:0000269" key="5">
    <source>
    </source>
</evidence>
<evidence type="ECO:0000269" key="6">
    <source>
    </source>
</evidence>
<evidence type="ECO:0000269" key="7">
    <source>
    </source>
</evidence>
<evidence type="ECO:0000303" key="8">
    <source>
    </source>
</evidence>
<evidence type="ECO:0000303" key="9">
    <source>
    </source>
</evidence>
<evidence type="ECO:0000305" key="10"/>
<evidence type="ECO:0000305" key="11">
    <source>
    </source>
</evidence>
<evidence type="ECO:0000312" key="12">
    <source>
        <dbReference type="EMBL" id="CCP42782.1"/>
    </source>
</evidence>
<evidence type="ECO:0007744" key="13">
    <source>
        <dbReference type="PDB" id="5M3I"/>
    </source>
</evidence>
<evidence type="ECO:0007744" key="14">
    <source>
        <dbReference type="PDB" id="7YK3"/>
    </source>
</evidence>
<evidence type="ECO:0007744" key="15">
    <source>
    </source>
</evidence>
<evidence type="ECO:0007829" key="16">
    <source>
        <dbReference type="PDB" id="5M3I"/>
    </source>
</evidence>
<evidence type="ECO:0007829" key="17">
    <source>
        <dbReference type="PDB" id="7YK3"/>
    </source>
</evidence>
<accession>O53605</accession>
<accession>F2GPR3</accession>
<accession>I6XUB1</accession>
<accession>Q7DAJ0</accession>
<organism>
    <name type="scientific">Mycobacterium tuberculosis (strain ATCC 25618 / H37Rv)</name>
    <dbReference type="NCBI Taxonomy" id="83332"/>
    <lineage>
        <taxon>Bacteria</taxon>
        <taxon>Bacillati</taxon>
        <taxon>Actinomycetota</taxon>
        <taxon>Actinomycetes</taxon>
        <taxon>Mycobacteriales</taxon>
        <taxon>Mycobacteriaceae</taxon>
        <taxon>Mycobacterium</taxon>
        <taxon>Mycobacterium tuberculosis complex</taxon>
    </lineage>
</organism>
<gene>
    <name evidence="9" type="primary">darG</name>
    <name evidence="12" type="ordered locus">Rv0060</name>
</gene>
<name>DARG_MYCTU</name>
<protein>
    <recommendedName>
        <fullName evidence="8">DNA ADP-ribosyl glycohydrolase</fullName>
        <shortName evidence="8">DarG</shortName>
        <ecNumber evidence="4">3.2.2.-</ecNumber>
    </recommendedName>
    <alternativeName>
        <fullName evidence="8">Antitoxin DarG</fullName>
    </alternativeName>
</protein>
<feature type="chain" id="PRO_0000456046" description="DNA ADP-ribosyl glycohydrolase">
    <location>
        <begin position="1"/>
        <end position="352"/>
    </location>
</feature>
<feature type="domain" description="Macro" evidence="2">
    <location>
        <begin position="1"/>
        <end position="155"/>
    </location>
</feature>
<feature type="region of interest" description="Interaction with DarT" evidence="7">
    <location>
        <begin position="164"/>
        <end position="352"/>
    </location>
</feature>
<feature type="active site" description="Nucleophile" evidence="1">
    <location>
        <position position="80"/>
    </location>
</feature>
<feature type="binding site" evidence="1">
    <location>
        <begin position="8"/>
        <end position="9"/>
    </location>
    <ligand>
        <name>ADP-D-ribose</name>
        <dbReference type="ChEBI" id="CHEBI:57967"/>
    </ligand>
</feature>
<feature type="binding site" evidence="1">
    <location>
        <begin position="20"/>
        <end position="22"/>
    </location>
    <ligand>
        <name>ADP-D-ribose</name>
        <dbReference type="ChEBI" id="CHEBI:57967"/>
    </ligand>
</feature>
<feature type="binding site" evidence="1">
    <location>
        <begin position="31"/>
        <end position="34"/>
    </location>
    <ligand>
        <name>ADP-D-ribose</name>
        <dbReference type="ChEBI" id="CHEBI:57967"/>
    </ligand>
</feature>
<feature type="binding site" evidence="1">
    <location>
        <position position="79"/>
    </location>
    <ligand>
        <name>ADP-D-ribose</name>
        <dbReference type="ChEBI" id="CHEBI:57967"/>
    </ligand>
</feature>
<feature type="binding site" evidence="1">
    <location>
        <begin position="117"/>
        <end position="121"/>
    </location>
    <ligand>
        <name>ADP-D-ribose</name>
        <dbReference type="ChEBI" id="CHEBI:57967"/>
    </ligand>
</feature>
<feature type="strand" evidence="16">
    <location>
        <begin position="2"/>
        <end position="4"/>
    </location>
</feature>
<feature type="helix" evidence="16">
    <location>
        <begin position="9"/>
        <end position="11"/>
    </location>
</feature>
<feature type="strand" evidence="16">
    <location>
        <begin position="14"/>
        <end position="21"/>
    </location>
</feature>
<feature type="strand" evidence="16">
    <location>
        <begin position="23"/>
        <end position="25"/>
    </location>
</feature>
<feature type="helix" evidence="16">
    <location>
        <begin position="30"/>
        <end position="38"/>
    </location>
</feature>
<feature type="helix" evidence="16">
    <location>
        <begin position="40"/>
        <end position="51"/>
    </location>
</feature>
<feature type="strand" evidence="16">
    <location>
        <begin position="61"/>
        <end position="64"/>
    </location>
</feature>
<feature type="strand" evidence="16">
    <location>
        <begin position="68"/>
        <end position="70"/>
    </location>
</feature>
<feature type="strand" evidence="16">
    <location>
        <begin position="72"/>
        <end position="78"/>
    </location>
</feature>
<feature type="helix" evidence="16">
    <location>
        <begin position="89"/>
        <end position="105"/>
    </location>
</feature>
<feature type="strand" evidence="16">
    <location>
        <begin position="110"/>
        <end position="113"/>
    </location>
</feature>
<feature type="helix" evidence="16">
    <location>
        <begin position="125"/>
        <end position="137"/>
    </location>
</feature>
<feature type="strand" evidence="16">
    <location>
        <begin position="142"/>
        <end position="146"/>
    </location>
</feature>
<feature type="helix" evidence="17">
    <location>
        <begin position="166"/>
        <end position="185"/>
    </location>
</feature>
<feature type="helix" evidence="17">
    <location>
        <begin position="196"/>
        <end position="209"/>
    </location>
</feature>
<feature type="helix" evidence="17">
    <location>
        <begin position="211"/>
        <end position="213"/>
    </location>
</feature>
<feature type="helix" evidence="17">
    <location>
        <begin position="227"/>
        <end position="235"/>
    </location>
</feature>
<feature type="turn" evidence="17">
    <location>
        <begin position="238"/>
        <end position="240"/>
    </location>
</feature>
<feature type="strand" evidence="17">
    <location>
        <begin position="241"/>
        <end position="243"/>
    </location>
</feature>
<feature type="strand" evidence="17">
    <location>
        <begin position="256"/>
        <end position="259"/>
    </location>
</feature>
<feature type="helix" evidence="17">
    <location>
        <begin position="261"/>
        <end position="273"/>
    </location>
</feature>
<feature type="helix" evidence="17">
    <location>
        <begin position="277"/>
        <end position="290"/>
    </location>
</feature>
<feature type="turn" evidence="17">
    <location>
        <begin position="291"/>
        <end position="293"/>
    </location>
</feature>
<feature type="helix" evidence="17">
    <location>
        <begin position="297"/>
        <end position="312"/>
    </location>
</feature>
<feature type="helix" evidence="17">
    <location>
        <begin position="318"/>
        <end position="329"/>
    </location>
</feature>
<feature type="turn" evidence="17">
    <location>
        <begin position="333"/>
        <end position="335"/>
    </location>
</feature>
<feature type="helix" evidence="17">
    <location>
        <begin position="338"/>
        <end position="350"/>
    </location>
</feature>
<sequence>MITYGSGDLLRADTEALVNTVNCVGVMGKGIALQFKRRYPEMFTAYEKACKRGEVTIGKMFVVDTGQLDGPKHIINFPTKKHWRAPSKLAYIDAGLIDLIRVIRELNIASVAVPPLGVGNGGLDWEDVEQRLVSAFQQLPDVDAVIYPPSGGSRAIEGVEGLRMTWGRAVILEAMRRYLQQRRAMEPWEDPAGISHLEIQKLMYFANEADPDLALDFTPGRYGPYSERVRHLLQGMEGAFTVGLGDGTARVLANQPISLTTKGTDAITDYLATDAAADRVSAAVDTVLRVIEGFEGPYGVELLASTHWVATREGAKEPATAAAAVRKWTKRKGRIYSDDRIGVALDRILMTA</sequence>
<keyword id="KW-0002">3D-structure</keyword>
<keyword id="KW-0378">Hydrolase</keyword>
<keyword id="KW-1185">Reference proteome</keyword>
<keyword id="KW-1277">Toxin-antitoxin system</keyword>